<gene>
    <name type="primary">pip</name>
    <name type="ordered locus">TV0934</name>
    <name type="ORF">TVG0960913</name>
</gene>
<comment type="function">
    <text evidence="1">Cleaves H-Pro-AMC as well as a wide spectrum of amino acid substrates and several peptide substrates without a proline at the N-terminus. In conjunction with the three factors F1, F2 and F3, Tricorn degrades oligopeptides in a sequential manner, yielding free amino acids (By similarity).</text>
</comment>
<comment type="catalytic activity">
    <reaction>
        <text>Release of N-terminal proline from a peptide.</text>
        <dbReference type="EC" id="3.4.11.5"/>
    </reaction>
</comment>
<comment type="subunit">
    <text evidence="1">Part of the tricorn proteolytic complex.</text>
</comment>
<comment type="similarity">
    <text evidence="3">Belongs to the peptidase S33 family.</text>
</comment>
<accession>Q97A76</accession>
<evidence type="ECO:0000250" key="1"/>
<evidence type="ECO:0000255" key="2"/>
<evidence type="ECO:0000305" key="3"/>
<protein>
    <recommendedName>
        <fullName>Proline iminopeptidase</fullName>
        <shortName>PIP</shortName>
        <ecNumber>3.4.11.5</ecNumber>
    </recommendedName>
    <alternativeName>
        <fullName>Prolyl aminopeptidase</fullName>
        <shortName>PAP</shortName>
    </alternativeName>
    <alternativeName>
        <fullName>Tricorn protease-interacting factor F1</fullName>
    </alternativeName>
</protein>
<feature type="chain" id="PRO_0000080852" description="Proline iminopeptidase">
    <location>
        <begin position="1"/>
        <end position="295"/>
    </location>
</feature>
<feature type="domain" description="AB hydrolase-1" evidence="2">
    <location>
        <begin position="35"/>
        <end position="279"/>
    </location>
</feature>
<feature type="active site" description="Nucleophile" evidence="1">
    <location>
        <position position="107"/>
    </location>
</feature>
<feature type="active site" evidence="1">
    <location>
        <position position="246"/>
    </location>
</feature>
<feature type="active site" description="Proton donor" evidence="1">
    <location>
        <position position="273"/>
    </location>
</feature>
<keyword id="KW-0031">Aminopeptidase</keyword>
<keyword id="KW-0378">Hydrolase</keyword>
<keyword id="KW-0645">Protease</keyword>
<sequence>MRKLSRCEDGYVKIQGIYIYYKVCKAENEKAKLMTLHGGPGMSHDYLLSLTDLAEKGITVLFYDQFGCGRSEEPEKEKFTIDYGVEEAEAVKKNIFGDDKVFLMGSSYGGALALAYAVKYQAHLKGLIISGGLSSVPLTVKEMQRLIDELPEKYRNAIRKYGEVGDYQNPEYQEAVNYFYHQHLLRSEDWPPEVLKSLEYAEERNVYRTMNGPNEFTITGTIRDWDITDKIGIISVPTLITVGEFDEVTQNVAEVIHSKIDNSQLIVFKACSHLTMWEDRDEYNRILLQFIEKNI</sequence>
<reference key="1">
    <citation type="journal article" date="2000" name="Proc. Natl. Acad. Sci. U.S.A.">
        <title>Archaeal adaptation to higher temperatures revealed by genomic sequence of Thermoplasma volcanium.</title>
        <authorList>
            <person name="Kawashima T."/>
            <person name="Amano N."/>
            <person name="Koike H."/>
            <person name="Makino S."/>
            <person name="Higuchi S."/>
            <person name="Kawashima-Ohya Y."/>
            <person name="Watanabe K."/>
            <person name="Yamazaki M."/>
            <person name="Kanehori K."/>
            <person name="Kawamoto T."/>
            <person name="Nunoshiba T."/>
            <person name="Yamamoto Y."/>
            <person name="Aramaki H."/>
            <person name="Makino K."/>
            <person name="Suzuki M."/>
        </authorList>
    </citation>
    <scope>NUCLEOTIDE SEQUENCE [LARGE SCALE GENOMIC DNA]</scope>
    <source>
        <strain>ATCC 51530 / DSM 4299 / JCM 9571 / NBRC 15438 / GSS1</strain>
    </source>
</reference>
<proteinExistence type="inferred from homology"/>
<name>PIP_THEVO</name>
<organism>
    <name type="scientific">Thermoplasma volcanium (strain ATCC 51530 / DSM 4299 / JCM 9571 / NBRC 15438 / GSS1)</name>
    <dbReference type="NCBI Taxonomy" id="273116"/>
    <lineage>
        <taxon>Archaea</taxon>
        <taxon>Methanobacteriati</taxon>
        <taxon>Thermoplasmatota</taxon>
        <taxon>Thermoplasmata</taxon>
        <taxon>Thermoplasmatales</taxon>
        <taxon>Thermoplasmataceae</taxon>
        <taxon>Thermoplasma</taxon>
    </lineage>
</organism>
<dbReference type="EC" id="3.4.11.5"/>
<dbReference type="EMBL" id="BA000011">
    <property type="protein sequence ID" value="BAB60076.1"/>
    <property type="molecule type" value="Genomic_DNA"/>
</dbReference>
<dbReference type="SMR" id="Q97A76"/>
<dbReference type="STRING" id="273116.gene:9381726"/>
<dbReference type="ESTHER" id="thevo-pip">
    <property type="family name" value="Proline_iminopeptidase"/>
</dbReference>
<dbReference type="PaxDb" id="273116-14325151"/>
<dbReference type="KEGG" id="tvo:TVG0960913"/>
<dbReference type="eggNOG" id="arCOG01648">
    <property type="taxonomic scope" value="Archaea"/>
</dbReference>
<dbReference type="HOGENOM" id="CLU_020336_15_1_2"/>
<dbReference type="PhylomeDB" id="Q97A76"/>
<dbReference type="Proteomes" id="UP000001017">
    <property type="component" value="Chromosome"/>
</dbReference>
<dbReference type="GO" id="GO:0016020">
    <property type="term" value="C:membrane"/>
    <property type="evidence" value="ECO:0007669"/>
    <property type="project" value="TreeGrafter"/>
</dbReference>
<dbReference type="GO" id="GO:0004177">
    <property type="term" value="F:aminopeptidase activity"/>
    <property type="evidence" value="ECO:0007669"/>
    <property type="project" value="UniProtKB-KW"/>
</dbReference>
<dbReference type="GO" id="GO:0006508">
    <property type="term" value="P:proteolysis"/>
    <property type="evidence" value="ECO:0007669"/>
    <property type="project" value="UniProtKB-KW"/>
</dbReference>
<dbReference type="Gene3D" id="3.40.50.1820">
    <property type="entry name" value="alpha/beta hydrolase"/>
    <property type="match status" value="1"/>
</dbReference>
<dbReference type="InterPro" id="IPR000073">
    <property type="entry name" value="AB_hydrolase_1"/>
</dbReference>
<dbReference type="InterPro" id="IPR029058">
    <property type="entry name" value="AB_hydrolase_fold"/>
</dbReference>
<dbReference type="InterPro" id="IPR050266">
    <property type="entry name" value="AB_hydrolase_sf"/>
</dbReference>
<dbReference type="InterPro" id="IPR002410">
    <property type="entry name" value="Peptidase_S33"/>
</dbReference>
<dbReference type="InterPro" id="IPR005945">
    <property type="entry name" value="Pro_imino_pep"/>
</dbReference>
<dbReference type="NCBIfam" id="TIGR01250">
    <property type="entry name" value="pro_imino_pep_2"/>
    <property type="match status" value="1"/>
</dbReference>
<dbReference type="NCBIfam" id="NF045948">
    <property type="entry name" value="ProImpepThrmp"/>
    <property type="match status" value="1"/>
</dbReference>
<dbReference type="PANTHER" id="PTHR43798:SF31">
    <property type="entry name" value="AB HYDROLASE SUPERFAMILY PROTEIN YCLE"/>
    <property type="match status" value="1"/>
</dbReference>
<dbReference type="PANTHER" id="PTHR43798">
    <property type="entry name" value="MONOACYLGLYCEROL LIPASE"/>
    <property type="match status" value="1"/>
</dbReference>
<dbReference type="Pfam" id="PF00561">
    <property type="entry name" value="Abhydrolase_1"/>
    <property type="match status" value="1"/>
</dbReference>
<dbReference type="PIRSF" id="PIRSF005539">
    <property type="entry name" value="Pept_S33_TRI_F1"/>
    <property type="match status" value="1"/>
</dbReference>
<dbReference type="PRINTS" id="PR00111">
    <property type="entry name" value="ABHYDROLASE"/>
</dbReference>
<dbReference type="PRINTS" id="PR00793">
    <property type="entry name" value="PROAMNOPTASE"/>
</dbReference>
<dbReference type="SUPFAM" id="SSF53474">
    <property type="entry name" value="alpha/beta-Hydrolases"/>
    <property type="match status" value="1"/>
</dbReference>